<keyword id="KW-0963">Cytoplasm</keyword>
<keyword id="KW-0574">Periplasm</keyword>
<keyword id="KW-0732">Signal</keyword>
<dbReference type="EMBL" id="CP001657">
    <property type="protein sequence ID" value="ACT14599.1"/>
    <property type="molecule type" value="Genomic_DNA"/>
</dbReference>
<dbReference type="STRING" id="561230.PC1_3584"/>
<dbReference type="KEGG" id="pct:PC1_3584"/>
<dbReference type="eggNOG" id="ENOG5031JGK">
    <property type="taxonomic scope" value="Bacteria"/>
</dbReference>
<dbReference type="HOGENOM" id="CLU_108853_0_0_6"/>
<dbReference type="Proteomes" id="UP000002736">
    <property type="component" value="Chromosome"/>
</dbReference>
<dbReference type="GO" id="GO:0005829">
    <property type="term" value="C:cytosol"/>
    <property type="evidence" value="ECO:0007669"/>
    <property type="project" value="UniProtKB-SubCell"/>
</dbReference>
<dbReference type="GO" id="GO:0042597">
    <property type="term" value="C:periplasmic space"/>
    <property type="evidence" value="ECO:0007669"/>
    <property type="project" value="UniProtKB-SubCell"/>
</dbReference>
<dbReference type="GO" id="GO:0045182">
    <property type="term" value="F:translation regulator activity"/>
    <property type="evidence" value="ECO:0007669"/>
    <property type="project" value="InterPro"/>
</dbReference>
<dbReference type="HAMAP" id="MF_01332">
    <property type="entry name" value="SecM"/>
    <property type="match status" value="1"/>
</dbReference>
<dbReference type="InterPro" id="IPR009502">
    <property type="entry name" value="SecM"/>
</dbReference>
<dbReference type="NCBIfam" id="NF002799">
    <property type="entry name" value="PRK02943.1-1"/>
    <property type="match status" value="1"/>
</dbReference>
<dbReference type="Pfam" id="PF06558">
    <property type="entry name" value="SecM"/>
    <property type="match status" value="1"/>
</dbReference>
<dbReference type="PIRSF" id="PIRSF004572">
    <property type="entry name" value="SecM"/>
    <property type="match status" value="1"/>
</dbReference>
<gene>
    <name evidence="1" type="primary">secM</name>
    <name type="ordered locus">PC1_3584</name>
</gene>
<feature type="signal peptide" evidence="1">
    <location>
        <begin position="1"/>
        <end position="36"/>
    </location>
</feature>
<feature type="chain" id="PRO_5000486079" description="Secretion monitor">
    <location>
        <begin position="37"/>
        <end position="171"/>
    </location>
</feature>
<protein>
    <recommendedName>
        <fullName evidence="1">Secretion monitor</fullName>
    </recommendedName>
</protein>
<reference key="1">
    <citation type="submission" date="2009-07" db="EMBL/GenBank/DDBJ databases">
        <title>Complete sequence of Pectobacterium carotovorum subsp. carotovorum PC1.</title>
        <authorList>
            <consortium name="US DOE Joint Genome Institute"/>
            <person name="Lucas S."/>
            <person name="Copeland A."/>
            <person name="Lapidus A."/>
            <person name="Glavina del Rio T."/>
            <person name="Tice H."/>
            <person name="Bruce D."/>
            <person name="Goodwin L."/>
            <person name="Pitluck S."/>
            <person name="Munk A.C."/>
            <person name="Brettin T."/>
            <person name="Detter J.C."/>
            <person name="Han C."/>
            <person name="Tapia R."/>
            <person name="Larimer F."/>
            <person name="Land M."/>
            <person name="Hauser L."/>
            <person name="Kyrpides N."/>
            <person name="Mikhailova N."/>
            <person name="Balakrishnan V."/>
            <person name="Glasner J."/>
            <person name="Perna N.T."/>
        </authorList>
    </citation>
    <scope>NUCLEOTIDE SEQUENCE [LARGE SCALE GENOMIC DNA]</scope>
    <source>
        <strain>PC1</strain>
    </source>
</reference>
<sequence length="171" mass="19160">MIGILNRWRQFGRRYFWPHLLLGMVAASLGLPTSLNDSQDITSLPNSSSSVSRQNNVSLSLTDLVALKEAHRRSSYSVDYWHQHAIRTVIRHLSFALTTPQTVNAQQADELEPHSLVLLDTLNALLTQDSQYPLVISPRAGRVTFYPQAHHQVGIWLAQIRGIRAGPSLLS</sequence>
<organism>
    <name type="scientific">Pectobacterium carotovorum subsp. carotovorum (strain PC1)</name>
    <dbReference type="NCBI Taxonomy" id="561230"/>
    <lineage>
        <taxon>Bacteria</taxon>
        <taxon>Pseudomonadati</taxon>
        <taxon>Pseudomonadota</taxon>
        <taxon>Gammaproteobacteria</taxon>
        <taxon>Enterobacterales</taxon>
        <taxon>Pectobacteriaceae</taxon>
        <taxon>Pectobacterium</taxon>
    </lineage>
</organism>
<comment type="function">
    <text evidence="1">Regulates secA expression by translational coupling of the secM secA operon. Translational pausing at a specific Pro residue 5 residues before the end of the protein may allow disruption of a mRNA repressor helix that normally suppresses secA translation initiation.</text>
</comment>
<comment type="subcellular location">
    <subcellularLocation>
        <location evidence="1">Cytoplasm</location>
        <location evidence="1">Cytosol</location>
    </subcellularLocation>
    <subcellularLocation>
        <location evidence="1">Periplasm</location>
    </subcellularLocation>
    <text evidence="1">The active form is cytosolic, while the periplasmic form is rapidly degraded, mainly by the tail-specific protease.</text>
</comment>
<comment type="similarity">
    <text evidence="1">Belongs to the SecM family.</text>
</comment>
<evidence type="ECO:0000255" key="1">
    <source>
        <dbReference type="HAMAP-Rule" id="MF_01332"/>
    </source>
</evidence>
<name>SECM_PECCP</name>
<proteinExistence type="inferred from homology"/>
<accession>C6DET5</accession>